<keyword id="KW-0002">3D-structure</keyword>
<keyword id="KW-1262">Eukaryotic host gene expression shutoff by virus</keyword>
<keyword id="KW-1191">Eukaryotic host transcription shutoff by virus</keyword>
<keyword id="KW-1190">Host gene expression shutoff by virus</keyword>
<keyword id="KW-0945">Host-virus interaction</keyword>
<keyword id="KW-1111">Inhibition of eukaryotic host transcription initiation by virus</keyword>
<keyword id="KW-1185">Reference proteome</keyword>
<keyword id="KW-0946">Virion</keyword>
<proteinExistence type="evidence at protein level"/>
<organism>
    <name type="scientific">Acidianus two-tailed virus</name>
    <name type="common">ATV</name>
    <dbReference type="NCBI Taxonomy" id="315953"/>
    <lineage>
        <taxon>Viruses</taxon>
        <taxon>Viruses incertae sedis</taxon>
        <taxon>Bicaudaviridae</taxon>
        <taxon>Bicaudavirus</taxon>
    </lineage>
</organism>
<sequence length="145" mass="16834">MKNMLHPQKYETHVLDDLMEFYEGVIGYPEIDLRLAGEEAWLKGVNPELAEAVKKIIKTIRRYLEGSPYDGSEKPIPRYIIAEIFSQIAPEVQLLVNALDTEGKYGFLKHIKKLNLNSLAMLSKNYNENDKLWKELENEGYVYLE</sequence>
<accession>Q3V4R7</accession>
<feature type="chain" id="PRO_0000389051" description="RNAP inhibitory protein">
    <location>
        <begin position="1"/>
        <end position="145"/>
    </location>
</feature>
<feature type="region of interest" description="C-terminal tail, binds in the RNAP DNA-binding channel" evidence="2">
    <location>
        <begin position="110"/>
        <end position="123"/>
    </location>
</feature>
<feature type="helix" evidence="8">
    <location>
        <begin position="11"/>
        <end position="22"/>
    </location>
</feature>
<feature type="helix" evidence="8">
    <location>
        <begin position="28"/>
        <end position="45"/>
    </location>
</feature>
<feature type="helix" evidence="8">
    <location>
        <begin position="47"/>
        <end position="63"/>
    </location>
</feature>
<feature type="strand" evidence="8">
    <location>
        <begin position="64"/>
        <end position="66"/>
    </location>
</feature>
<feature type="strand" evidence="8">
    <location>
        <begin position="68"/>
        <end position="71"/>
    </location>
</feature>
<feature type="helix" evidence="8">
    <location>
        <begin position="78"/>
        <end position="87"/>
    </location>
</feature>
<feature type="helix" evidence="8">
    <location>
        <begin position="89"/>
        <end position="98"/>
    </location>
</feature>
<feature type="helix" evidence="8">
    <location>
        <begin position="102"/>
        <end position="108"/>
    </location>
</feature>
<feature type="strand" evidence="8">
    <location>
        <begin position="117"/>
        <end position="119"/>
    </location>
</feature>
<protein>
    <recommendedName>
        <fullName evidence="5">RNAP inhibitory protein</fullName>
        <shortName evidence="4">RIP</shortName>
    </recommendedName>
    <alternativeName>
        <fullName evidence="3">ORF145</fullName>
    </alternativeName>
</protein>
<evidence type="ECO:0000269" key="1">
    <source>
    </source>
</evidence>
<evidence type="ECO:0000269" key="2">
    <source>
    </source>
</evidence>
<evidence type="ECO:0000303" key="3">
    <source>
    </source>
</evidence>
<evidence type="ECO:0000303" key="4">
    <source>
    </source>
</evidence>
<evidence type="ECO:0000305" key="5">
    <source>
    </source>
</evidence>
<evidence type="ECO:0000305" key="6">
    <source>
    </source>
</evidence>
<evidence type="ECO:0000312" key="7">
    <source>
        <dbReference type="PDB" id="7OQ4"/>
    </source>
</evidence>
<evidence type="ECO:0007829" key="8">
    <source>
        <dbReference type="PDB" id="7OQ4"/>
    </source>
</evidence>
<organismHost>
    <name type="scientific">Acidianus convivator</name>
    <dbReference type="NCBI Taxonomy" id="269667"/>
</organismHost>
<reference key="1">
    <citation type="journal article" date="2005" name="Nature">
        <title>Virology: independent virus development outside a host.</title>
        <authorList>
            <person name="Haring M."/>
            <person name="Vestergaard G."/>
            <person name="Rachel R."/>
            <person name="Chen L."/>
            <person name="Garrett R.A."/>
            <person name="Prangishvili D."/>
        </authorList>
    </citation>
    <scope>NUCLEOTIDE SEQUENCE [GENOMIC DNA]</scope>
</reference>
<reference key="2">
    <citation type="journal article" date="2016" name="Nat. Commun.">
        <title>Repression of RNA polymerase by the archaeo-viral regulator ORF145/RIP.</title>
        <authorList>
            <person name="Sheppard C."/>
            <person name="Blombach F."/>
            <person name="Belsom A."/>
            <person name="Schulz S."/>
            <person name="Daviter T."/>
            <person name="Smollett K."/>
            <person name="Mahieu E."/>
            <person name="Erdmann S."/>
            <person name="Tinnefeld P."/>
            <person name="Garrett R."/>
            <person name="Grohmann D."/>
            <person name="Rappsilber J."/>
            <person name="Werner F."/>
        </authorList>
    </citation>
    <scope>FUNCTION</scope>
    <scope>INTERACTION WITH HOST RNAP SUBUNIT RPOA1</scope>
</reference>
<reference evidence="7" key="3">
    <citation type="journal article" date="2021" name="Nat. Commun.">
        <title>Structural basis of RNA polymerase inhibition by viral and host factors.</title>
        <authorList>
            <person name="Pilotto S."/>
            <person name="Fouqueau T."/>
            <person name="Lukoyanova N."/>
            <person name="Sheppard C."/>
            <person name="Lucas-Staat S."/>
            <person name="Diaz-Santin L.M."/>
            <person name="Matelska D."/>
            <person name="Prangishvili D."/>
            <person name="Cheung A.C.M."/>
            <person name="Werner F."/>
        </authorList>
    </citation>
    <scope>STRUCTURE BY ELECTRON MICROSCOPY (3.27 ANGSTROMS) IN COMPLEX WITH HOST (S.ACIDOCALDARIUS) RNA POLYMERASE</scope>
    <scope>FUNCTION</scope>
    <scope>SUBUNIT</scope>
    <scope>INDUCTION</scope>
    <scope>DOMAIN</scope>
</reference>
<name>RIP_ATV</name>
<dbReference type="EMBL" id="AJ888457">
    <property type="protein sequence ID" value="CAI59897.1"/>
    <property type="molecule type" value="Genomic_DNA"/>
</dbReference>
<dbReference type="RefSeq" id="YP_319873.1">
    <property type="nucleotide sequence ID" value="NC_007409.1"/>
</dbReference>
<dbReference type="PDB" id="7OQ4">
    <property type="method" value="EM"/>
    <property type="resolution" value="3.27 A"/>
    <property type="chains" value="Z=1-145"/>
</dbReference>
<dbReference type="PDBsum" id="7OQ4"/>
<dbReference type="EMDB" id="EMD-13026"/>
<dbReference type="SMR" id="Q3V4R7"/>
<dbReference type="GeneID" id="4484253"/>
<dbReference type="KEGG" id="vg:4484253"/>
<dbReference type="OrthoDB" id="15915at10239"/>
<dbReference type="Proteomes" id="UP000002150">
    <property type="component" value="Genome"/>
</dbReference>
<dbReference type="GO" id="GO:0044423">
    <property type="term" value="C:virion component"/>
    <property type="evidence" value="ECO:0007669"/>
    <property type="project" value="UniProtKB-KW"/>
</dbReference>
<dbReference type="GO" id="GO:0039657">
    <property type="term" value="P:symbiont-mediated suppression of host gene expression"/>
    <property type="evidence" value="ECO:0007669"/>
    <property type="project" value="UniProtKB-KW"/>
</dbReference>
<dbReference type="GO" id="GO:0039653">
    <property type="term" value="P:symbiont-mediated suppression of host transcription"/>
    <property type="evidence" value="ECO:0000314"/>
    <property type="project" value="UniProtKB"/>
</dbReference>
<dbReference type="FunFam" id="1.20.120.950:FF:000001">
    <property type="entry name" value="Archaeal structural protein"/>
    <property type="match status" value="1"/>
</dbReference>
<dbReference type="Gene3D" id="1.20.120.950">
    <property type="entry name" value="Uncharacterised protein DUF5062"/>
    <property type="match status" value="1"/>
</dbReference>
<dbReference type="InterPro" id="IPR054511">
    <property type="entry name" value="RIP_P131-like"/>
</dbReference>
<dbReference type="Pfam" id="PF22238">
    <property type="entry name" value="RIP_P131-like"/>
    <property type="match status" value="1"/>
</dbReference>
<comment type="function">
    <text evidence="1 2 6">Plays a role in the inhibition of global transcription by interacting with the RNA polymerase (RNAP) clamp, locking it in a fixed position and inhibiting the formation and/or stability of the pre-initiation complex (PIC) (PubMed:27882920). Also overlaps with the transcription factor B binding site; overall RIP probably interferes with DNA loading onto RNAP but does not displace DNA once it is loaded (PubMed:34535646). May play a role in virus particle assembly, possibly by dissociating active RNAP from the virus genome (Probable).</text>
</comment>
<comment type="subunit">
    <text evidence="1 2">Interacts with host RNA polymerase (RNAP) subunits Rpo1N and Rpo2.</text>
</comment>
<comment type="subcellular location">
    <subcellularLocation>
        <location>Virion</location>
    </subcellularLocation>
</comment>
<comment type="induction">
    <text evidence="2">Not detected in early stages of infection (in Acidianus convivator), strongly up-regulated at 72 hours post infection (at protein level).</text>
</comment>
<comment type="domain">
    <text evidence="2">The C-terminal tail binds inside the RNAP DNA-binding channel, locking the clamp into a fixed conformation (in S.acidocaldarius).</text>
</comment>
<comment type="similarity">
    <text evidence="5 6">Belongs to the viral ORF131/RIP family.</text>
</comment>